<dbReference type="EMBL" id="AM494475">
    <property type="protein sequence ID" value="CAM79614.1"/>
    <property type="molecule type" value="Genomic_DNA"/>
</dbReference>
<dbReference type="RefSeq" id="WP_011944535.1">
    <property type="nucleotide sequence ID" value="NC_009488.1"/>
</dbReference>
<dbReference type="SMR" id="A5CCY5"/>
<dbReference type="KEGG" id="ots:OTBS_0548"/>
<dbReference type="eggNOG" id="COG0359">
    <property type="taxonomic scope" value="Bacteria"/>
</dbReference>
<dbReference type="HOGENOM" id="CLU_078938_3_0_5"/>
<dbReference type="Proteomes" id="UP000001565">
    <property type="component" value="Chromosome"/>
</dbReference>
<dbReference type="GO" id="GO:1990904">
    <property type="term" value="C:ribonucleoprotein complex"/>
    <property type="evidence" value="ECO:0007669"/>
    <property type="project" value="UniProtKB-KW"/>
</dbReference>
<dbReference type="GO" id="GO:0005840">
    <property type="term" value="C:ribosome"/>
    <property type="evidence" value="ECO:0007669"/>
    <property type="project" value="UniProtKB-KW"/>
</dbReference>
<dbReference type="GO" id="GO:0019843">
    <property type="term" value="F:rRNA binding"/>
    <property type="evidence" value="ECO:0007669"/>
    <property type="project" value="UniProtKB-UniRule"/>
</dbReference>
<dbReference type="GO" id="GO:0003735">
    <property type="term" value="F:structural constituent of ribosome"/>
    <property type="evidence" value="ECO:0007669"/>
    <property type="project" value="InterPro"/>
</dbReference>
<dbReference type="GO" id="GO:0006412">
    <property type="term" value="P:translation"/>
    <property type="evidence" value="ECO:0007669"/>
    <property type="project" value="UniProtKB-UniRule"/>
</dbReference>
<dbReference type="Gene3D" id="3.10.430.100">
    <property type="entry name" value="Ribosomal protein L9, C-terminal domain"/>
    <property type="match status" value="1"/>
</dbReference>
<dbReference type="Gene3D" id="3.40.5.10">
    <property type="entry name" value="Ribosomal protein L9, N-terminal domain"/>
    <property type="match status" value="1"/>
</dbReference>
<dbReference type="HAMAP" id="MF_00503">
    <property type="entry name" value="Ribosomal_bL9"/>
    <property type="match status" value="1"/>
</dbReference>
<dbReference type="InterPro" id="IPR000244">
    <property type="entry name" value="Ribosomal_bL9"/>
</dbReference>
<dbReference type="InterPro" id="IPR009027">
    <property type="entry name" value="Ribosomal_bL9/RNase_H1_N"/>
</dbReference>
<dbReference type="InterPro" id="IPR020594">
    <property type="entry name" value="Ribosomal_bL9_bac/chp"/>
</dbReference>
<dbReference type="InterPro" id="IPR020069">
    <property type="entry name" value="Ribosomal_bL9_C"/>
</dbReference>
<dbReference type="InterPro" id="IPR036791">
    <property type="entry name" value="Ribosomal_bL9_C_sf"/>
</dbReference>
<dbReference type="InterPro" id="IPR020070">
    <property type="entry name" value="Ribosomal_bL9_N"/>
</dbReference>
<dbReference type="InterPro" id="IPR036935">
    <property type="entry name" value="Ribosomal_bL9_N_sf"/>
</dbReference>
<dbReference type="NCBIfam" id="TIGR00158">
    <property type="entry name" value="L9"/>
    <property type="match status" value="1"/>
</dbReference>
<dbReference type="PANTHER" id="PTHR21368">
    <property type="entry name" value="50S RIBOSOMAL PROTEIN L9"/>
    <property type="match status" value="1"/>
</dbReference>
<dbReference type="Pfam" id="PF03948">
    <property type="entry name" value="Ribosomal_L9_C"/>
    <property type="match status" value="1"/>
</dbReference>
<dbReference type="Pfam" id="PF01281">
    <property type="entry name" value="Ribosomal_L9_N"/>
    <property type="match status" value="1"/>
</dbReference>
<dbReference type="SUPFAM" id="SSF55658">
    <property type="entry name" value="L9 N-domain-like"/>
    <property type="match status" value="1"/>
</dbReference>
<dbReference type="SUPFAM" id="SSF55653">
    <property type="entry name" value="Ribosomal protein L9 C-domain"/>
    <property type="match status" value="1"/>
</dbReference>
<comment type="function">
    <text evidence="1">Binds to the 23S rRNA.</text>
</comment>
<comment type="similarity">
    <text evidence="1">Belongs to the bacterial ribosomal protein bL9 family.</text>
</comment>
<evidence type="ECO:0000255" key="1">
    <source>
        <dbReference type="HAMAP-Rule" id="MF_00503"/>
    </source>
</evidence>
<evidence type="ECO:0000305" key="2"/>
<keyword id="KW-1185">Reference proteome</keyword>
<keyword id="KW-0687">Ribonucleoprotein</keyword>
<keyword id="KW-0689">Ribosomal protein</keyword>
<keyword id="KW-0694">RNA-binding</keyword>
<keyword id="KW-0699">rRNA-binding</keyword>
<proteinExistence type="inferred from homology"/>
<accession>A5CCY5</accession>
<protein>
    <recommendedName>
        <fullName evidence="1">Large ribosomal subunit protein bL9</fullName>
    </recommendedName>
    <alternativeName>
        <fullName evidence="2">50S ribosomal protein L9</fullName>
    </alternativeName>
</protein>
<sequence>MKLILIKPVKKLGKIMDIVDVANGFGRNYLLPRNYAIRATNANLEIVKSTVQQLNEKNQKGIAAAQAVMQKIDRSFITFICQTSDDGKLFGSITAKEIIKKLQISSDIKAYIDIKPIKTAGIHEVEVSLHAEVHCKIFINVARSNTEAQEYLKKFNTSLQDTNNNVLVEKNSSIS</sequence>
<name>RL9_ORITB</name>
<organism>
    <name type="scientific">Orientia tsutsugamushi (strain Boryong)</name>
    <name type="common">Rickettsia tsutsugamushi</name>
    <dbReference type="NCBI Taxonomy" id="357244"/>
    <lineage>
        <taxon>Bacteria</taxon>
        <taxon>Pseudomonadati</taxon>
        <taxon>Pseudomonadota</taxon>
        <taxon>Alphaproteobacteria</taxon>
        <taxon>Rickettsiales</taxon>
        <taxon>Rickettsiaceae</taxon>
        <taxon>Rickettsieae</taxon>
        <taxon>Orientia</taxon>
    </lineage>
</organism>
<reference key="1">
    <citation type="journal article" date="2007" name="Proc. Natl. Acad. Sci. U.S.A.">
        <title>The Orientia tsutsugamushi genome reveals massive proliferation of conjugative type IV secretion system and host-cell interaction genes.</title>
        <authorList>
            <person name="Cho N.-H."/>
            <person name="Kim H.-R."/>
            <person name="Lee J.-H."/>
            <person name="Kim S.-Y."/>
            <person name="Kim J."/>
            <person name="Cha S."/>
            <person name="Kim S.-Y."/>
            <person name="Darby A.C."/>
            <person name="Fuxelius H.-H."/>
            <person name="Yin J."/>
            <person name="Kim J.H."/>
            <person name="Kim J."/>
            <person name="Lee S.J."/>
            <person name="Koh Y.-S."/>
            <person name="Jang W.-J."/>
            <person name="Park K.-H."/>
            <person name="Andersson S.G.E."/>
            <person name="Choi M.-S."/>
            <person name="Kim I.-S."/>
        </authorList>
    </citation>
    <scope>NUCLEOTIDE SEQUENCE [LARGE SCALE GENOMIC DNA]</scope>
    <source>
        <strain>Boryong</strain>
    </source>
</reference>
<gene>
    <name evidence="1" type="primary">rplI</name>
    <name type="ordered locus">OTBS_0548</name>
</gene>
<feature type="chain" id="PRO_1000014824" description="Large ribosomal subunit protein bL9">
    <location>
        <begin position="1"/>
        <end position="175"/>
    </location>
</feature>